<comment type="function">
    <text evidence="1">Nucleoside triphosphate pyrophosphatase that hydrolyzes dTTP and UTP. May have a dual role in cell division arrest and in preventing the incorporation of modified nucleotides into cellular nucleic acids.</text>
</comment>
<comment type="catalytic activity">
    <reaction evidence="1">
        <text>dTTP + H2O = dTMP + diphosphate + H(+)</text>
        <dbReference type="Rhea" id="RHEA:28534"/>
        <dbReference type="ChEBI" id="CHEBI:15377"/>
        <dbReference type="ChEBI" id="CHEBI:15378"/>
        <dbReference type="ChEBI" id="CHEBI:33019"/>
        <dbReference type="ChEBI" id="CHEBI:37568"/>
        <dbReference type="ChEBI" id="CHEBI:63528"/>
        <dbReference type="EC" id="3.6.1.9"/>
    </reaction>
</comment>
<comment type="catalytic activity">
    <reaction evidence="1">
        <text>UTP + H2O = UMP + diphosphate + H(+)</text>
        <dbReference type="Rhea" id="RHEA:29395"/>
        <dbReference type="ChEBI" id="CHEBI:15377"/>
        <dbReference type="ChEBI" id="CHEBI:15378"/>
        <dbReference type="ChEBI" id="CHEBI:33019"/>
        <dbReference type="ChEBI" id="CHEBI:46398"/>
        <dbReference type="ChEBI" id="CHEBI:57865"/>
        <dbReference type="EC" id="3.6.1.9"/>
    </reaction>
</comment>
<comment type="cofactor">
    <cofactor evidence="1">
        <name>a divalent metal cation</name>
        <dbReference type="ChEBI" id="CHEBI:60240"/>
    </cofactor>
</comment>
<comment type="subcellular location">
    <subcellularLocation>
        <location evidence="1">Cytoplasm</location>
    </subcellularLocation>
</comment>
<comment type="similarity">
    <text evidence="1">Belongs to the Maf family. YhdE subfamily.</text>
</comment>
<proteinExistence type="inferred from homology"/>
<accession>Q39E95</accession>
<reference key="1">
    <citation type="submission" date="2005-10" db="EMBL/GenBank/DDBJ databases">
        <title>Complete sequence of chromosome 1 of Burkholderia sp. 383.</title>
        <authorList>
            <consortium name="US DOE Joint Genome Institute"/>
            <person name="Copeland A."/>
            <person name="Lucas S."/>
            <person name="Lapidus A."/>
            <person name="Barry K."/>
            <person name="Detter J.C."/>
            <person name="Glavina T."/>
            <person name="Hammon N."/>
            <person name="Israni S."/>
            <person name="Pitluck S."/>
            <person name="Chain P."/>
            <person name="Malfatti S."/>
            <person name="Shin M."/>
            <person name="Vergez L."/>
            <person name="Schmutz J."/>
            <person name="Larimer F."/>
            <person name="Land M."/>
            <person name="Kyrpides N."/>
            <person name="Lykidis A."/>
            <person name="Richardson P."/>
        </authorList>
    </citation>
    <scope>NUCLEOTIDE SEQUENCE [LARGE SCALE GENOMIC DNA]</scope>
    <source>
        <strain>ATCC 17760 / DSM 23089 / LMG 22485 / NCIMB 9086 / R18194 / 383</strain>
    </source>
</reference>
<name>NTPPA_BURL3</name>
<keyword id="KW-0963">Cytoplasm</keyword>
<keyword id="KW-0378">Hydrolase</keyword>
<keyword id="KW-0546">Nucleotide metabolism</keyword>
<sequence>MPSSTPPALFPTLYLASQSPRRQELLQQIGVRFELLLPRPDEDAEALEAELPGEAADAYVRRVTIAKAEAARARLVASGKPASPVLVADTTVTIDGAILGKPANADDALSMLTRLAGREHAVLTAVAVIDADGELLPPALSRSSVRFAPASRDAYARYVESGEPFGKAGAYAIQGRAAEFIERIDGSHSGIMGLPLFETAALLRAARVAF</sequence>
<organism>
    <name type="scientific">Burkholderia lata (strain ATCC 17760 / DSM 23089 / LMG 22485 / NCIMB 9086 / R18194 / 383)</name>
    <dbReference type="NCBI Taxonomy" id="482957"/>
    <lineage>
        <taxon>Bacteria</taxon>
        <taxon>Pseudomonadati</taxon>
        <taxon>Pseudomonadota</taxon>
        <taxon>Betaproteobacteria</taxon>
        <taxon>Burkholderiales</taxon>
        <taxon>Burkholderiaceae</taxon>
        <taxon>Burkholderia</taxon>
        <taxon>Burkholderia cepacia complex</taxon>
    </lineage>
</organism>
<gene>
    <name type="ordered locus">Bcep18194_A5627</name>
</gene>
<evidence type="ECO:0000255" key="1">
    <source>
        <dbReference type="HAMAP-Rule" id="MF_00528"/>
    </source>
</evidence>
<dbReference type="EC" id="3.6.1.9" evidence="1"/>
<dbReference type="EMBL" id="CP000151">
    <property type="protein sequence ID" value="ABB09221.1"/>
    <property type="molecule type" value="Genomic_DNA"/>
</dbReference>
<dbReference type="RefSeq" id="WP_011352747.1">
    <property type="nucleotide sequence ID" value="NC_007510.1"/>
</dbReference>
<dbReference type="SMR" id="Q39E95"/>
<dbReference type="GeneID" id="45095514"/>
<dbReference type="KEGG" id="bur:Bcep18194_A5627"/>
<dbReference type="PATRIC" id="fig|482957.22.peg.2596"/>
<dbReference type="HOGENOM" id="CLU_040416_2_1_4"/>
<dbReference type="Proteomes" id="UP000002705">
    <property type="component" value="Chromosome 1"/>
</dbReference>
<dbReference type="GO" id="GO:0005737">
    <property type="term" value="C:cytoplasm"/>
    <property type="evidence" value="ECO:0007669"/>
    <property type="project" value="UniProtKB-SubCell"/>
</dbReference>
<dbReference type="GO" id="GO:0036218">
    <property type="term" value="F:dTTP diphosphatase activity"/>
    <property type="evidence" value="ECO:0007669"/>
    <property type="project" value="RHEA"/>
</dbReference>
<dbReference type="GO" id="GO:0036221">
    <property type="term" value="F:UTP diphosphatase activity"/>
    <property type="evidence" value="ECO:0007669"/>
    <property type="project" value="RHEA"/>
</dbReference>
<dbReference type="GO" id="GO:0009117">
    <property type="term" value="P:nucleotide metabolic process"/>
    <property type="evidence" value="ECO:0007669"/>
    <property type="project" value="UniProtKB-KW"/>
</dbReference>
<dbReference type="CDD" id="cd00555">
    <property type="entry name" value="Maf"/>
    <property type="match status" value="1"/>
</dbReference>
<dbReference type="Gene3D" id="3.90.950.10">
    <property type="match status" value="1"/>
</dbReference>
<dbReference type="HAMAP" id="MF_00528">
    <property type="entry name" value="Maf"/>
    <property type="match status" value="1"/>
</dbReference>
<dbReference type="InterPro" id="IPR029001">
    <property type="entry name" value="ITPase-like_fam"/>
</dbReference>
<dbReference type="InterPro" id="IPR003697">
    <property type="entry name" value="Maf-like"/>
</dbReference>
<dbReference type="NCBIfam" id="TIGR00172">
    <property type="entry name" value="maf"/>
    <property type="match status" value="1"/>
</dbReference>
<dbReference type="PANTHER" id="PTHR43213">
    <property type="entry name" value="BIFUNCTIONAL DTTP/UTP PYROPHOSPHATASE/METHYLTRANSFERASE PROTEIN-RELATED"/>
    <property type="match status" value="1"/>
</dbReference>
<dbReference type="PANTHER" id="PTHR43213:SF5">
    <property type="entry name" value="BIFUNCTIONAL DTTP_UTP PYROPHOSPHATASE_METHYLTRANSFERASE PROTEIN-RELATED"/>
    <property type="match status" value="1"/>
</dbReference>
<dbReference type="Pfam" id="PF02545">
    <property type="entry name" value="Maf"/>
    <property type="match status" value="1"/>
</dbReference>
<dbReference type="PIRSF" id="PIRSF006305">
    <property type="entry name" value="Maf"/>
    <property type="match status" value="1"/>
</dbReference>
<dbReference type="SUPFAM" id="SSF52972">
    <property type="entry name" value="ITPase-like"/>
    <property type="match status" value="1"/>
</dbReference>
<protein>
    <recommendedName>
        <fullName evidence="1">dTTP/UTP pyrophosphatase</fullName>
        <shortName evidence="1">dTTPase/UTPase</shortName>
        <ecNumber evidence="1">3.6.1.9</ecNumber>
    </recommendedName>
    <alternativeName>
        <fullName evidence="1">Nucleoside triphosphate pyrophosphatase</fullName>
    </alternativeName>
    <alternativeName>
        <fullName evidence="1">Nucleotide pyrophosphatase</fullName>
        <shortName evidence="1">Nucleotide PPase</shortName>
    </alternativeName>
</protein>
<feature type="chain" id="PRO_0000267272" description="dTTP/UTP pyrophosphatase">
    <location>
        <begin position="1"/>
        <end position="210"/>
    </location>
</feature>
<feature type="active site" description="Proton acceptor" evidence="1">
    <location>
        <position position="89"/>
    </location>
</feature>
<feature type="site" description="Important for substrate specificity" evidence="1">
    <location>
        <position position="21"/>
    </location>
</feature>
<feature type="site" description="Important for substrate specificity" evidence="1">
    <location>
        <position position="90"/>
    </location>
</feature>
<feature type="site" description="Important for substrate specificity" evidence="1">
    <location>
        <position position="174"/>
    </location>
</feature>